<keyword id="KW-0028">Amino-acid biosynthesis</keyword>
<keyword id="KW-0368">Histidine biosynthesis</keyword>
<keyword id="KW-0428">Leader peptide</keyword>
<keyword id="KW-1185">Reference proteome</keyword>
<proteinExistence type="inferred from homology"/>
<sequence>MTRVQFKQHHHHHHPD</sequence>
<name>LPHI_ECO57</name>
<organism>
    <name type="scientific">Escherichia coli O157:H7</name>
    <dbReference type="NCBI Taxonomy" id="83334"/>
    <lineage>
        <taxon>Bacteria</taxon>
        <taxon>Pseudomonadati</taxon>
        <taxon>Pseudomonadota</taxon>
        <taxon>Gammaproteobacteria</taxon>
        <taxon>Enterobacterales</taxon>
        <taxon>Enterobacteriaceae</taxon>
        <taxon>Escherichia</taxon>
    </lineage>
</organism>
<gene>
    <name type="primary">hisL</name>
    <name type="ordered locus">Z3180</name>
    <name type="ordered locus">ECs2819</name>
</gene>
<feature type="peptide" id="PRO_0000043987" description="his operon leader peptide">
    <location>
        <begin position="1"/>
        <end position="16"/>
    </location>
</feature>
<comment type="function">
    <text evidence="1">This protein is involved in the attenuation mechanism for the control of the expression of the his operon structural genes.</text>
</comment>
<comment type="similarity">
    <text evidence="2">Belongs to the HisL family.</text>
</comment>
<dbReference type="EMBL" id="AE005174">
    <property type="protein sequence ID" value="AAG57077.1"/>
    <property type="molecule type" value="Genomic_DNA"/>
</dbReference>
<dbReference type="EMBL" id="BA000007">
    <property type="protein sequence ID" value="BAB36242.1"/>
    <property type="molecule type" value="Genomic_DNA"/>
</dbReference>
<dbReference type="PIR" id="A85827">
    <property type="entry name" value="A85827"/>
</dbReference>
<dbReference type="PIR" id="C90981">
    <property type="entry name" value="C90981"/>
</dbReference>
<dbReference type="RefSeq" id="WP_010904803.1">
    <property type="nucleotide sequence ID" value="NZ_VOAI01000013.1"/>
</dbReference>
<dbReference type="KEGG" id="ece:Z3180"/>
<dbReference type="HOGENOM" id="CLU_222361_0_0_6"/>
<dbReference type="Proteomes" id="UP000000558">
    <property type="component" value="Chromosome"/>
</dbReference>
<dbReference type="Proteomes" id="UP000002519">
    <property type="component" value="Chromosome"/>
</dbReference>
<dbReference type="GO" id="GO:0000105">
    <property type="term" value="P:L-histidine biosynthetic process"/>
    <property type="evidence" value="ECO:0007669"/>
    <property type="project" value="UniProtKB-KW"/>
</dbReference>
<dbReference type="InterPro" id="IPR012565">
    <property type="entry name" value="His_leader"/>
</dbReference>
<dbReference type="Pfam" id="PF08047">
    <property type="entry name" value="His_leader"/>
    <property type="match status" value="1"/>
</dbReference>
<accession>Q8X8T5</accession>
<reference key="1">
    <citation type="journal article" date="2001" name="Nature">
        <title>Genome sequence of enterohaemorrhagic Escherichia coli O157:H7.</title>
        <authorList>
            <person name="Perna N.T."/>
            <person name="Plunkett G. III"/>
            <person name="Burland V."/>
            <person name="Mau B."/>
            <person name="Glasner J.D."/>
            <person name="Rose D.J."/>
            <person name="Mayhew G.F."/>
            <person name="Evans P.S."/>
            <person name="Gregor J."/>
            <person name="Kirkpatrick H.A."/>
            <person name="Posfai G."/>
            <person name="Hackett J."/>
            <person name="Klink S."/>
            <person name="Boutin A."/>
            <person name="Shao Y."/>
            <person name="Miller L."/>
            <person name="Grotbeck E.J."/>
            <person name="Davis N.W."/>
            <person name="Lim A."/>
            <person name="Dimalanta E.T."/>
            <person name="Potamousis K."/>
            <person name="Apodaca J."/>
            <person name="Anantharaman T.S."/>
            <person name="Lin J."/>
            <person name="Yen G."/>
            <person name="Schwartz D.C."/>
            <person name="Welch R.A."/>
            <person name="Blattner F.R."/>
        </authorList>
    </citation>
    <scope>NUCLEOTIDE SEQUENCE [LARGE SCALE GENOMIC DNA]</scope>
    <source>
        <strain>O157:H7 / EDL933 / ATCC 700927 / EHEC</strain>
    </source>
</reference>
<reference key="2">
    <citation type="journal article" date="2001" name="DNA Res.">
        <title>Complete genome sequence of enterohemorrhagic Escherichia coli O157:H7 and genomic comparison with a laboratory strain K-12.</title>
        <authorList>
            <person name="Hayashi T."/>
            <person name="Makino K."/>
            <person name="Ohnishi M."/>
            <person name="Kurokawa K."/>
            <person name="Ishii K."/>
            <person name="Yokoyama K."/>
            <person name="Han C.-G."/>
            <person name="Ohtsubo E."/>
            <person name="Nakayama K."/>
            <person name="Murata T."/>
            <person name="Tanaka M."/>
            <person name="Tobe T."/>
            <person name="Iida T."/>
            <person name="Takami H."/>
            <person name="Honda T."/>
            <person name="Sasakawa C."/>
            <person name="Ogasawara N."/>
            <person name="Yasunaga T."/>
            <person name="Kuhara S."/>
            <person name="Shiba T."/>
            <person name="Hattori M."/>
            <person name="Shinagawa H."/>
        </authorList>
    </citation>
    <scope>NUCLEOTIDE SEQUENCE [LARGE SCALE GENOMIC DNA]</scope>
    <source>
        <strain>O157:H7 / Sakai / RIMD 0509952 / EHEC</strain>
    </source>
</reference>
<protein>
    <recommendedName>
        <fullName>his operon leader peptide</fullName>
    </recommendedName>
    <alternativeName>
        <fullName>his operon attenuator peptide</fullName>
    </alternativeName>
</protein>
<evidence type="ECO:0000250" key="1"/>
<evidence type="ECO:0000305" key="2"/>